<protein>
    <recommendedName>
        <fullName>Mu-conotoxin-like CalTx 12.2.1E</fullName>
    </recommendedName>
</protein>
<feature type="propeptide" id="PRO_0000392287" evidence="1">
    <location>
        <begin position="1" status="less than"/>
        <end position="1"/>
    </location>
</feature>
<feature type="peptide" id="PRO_0000392288" description="Mu-conotoxin-like CalTx 12.2.1E">
    <location>
        <begin position="2"/>
        <end position="43"/>
    </location>
</feature>
<feature type="modified residue" description="6'-bromotryptophan" evidence="1">
    <location>
        <position position="31"/>
    </location>
</feature>
<feature type="modified residue" description="4-hydroxyproline" evidence="1">
    <location>
        <position position="36"/>
    </location>
</feature>
<feature type="modified residue" description="6'-bromotryptophan" evidence="1">
    <location>
        <position position="40"/>
    </location>
</feature>
<feature type="disulfide bond" evidence="2">
    <location>
        <begin position="4"/>
        <end position="16"/>
    </location>
</feature>
<feature type="disulfide bond" evidence="1">
    <location>
        <begin position="11"/>
        <end position="24"/>
    </location>
</feature>
<feature type="disulfide bond" evidence="1">
    <location>
        <begin position="18"/>
        <end position="29"/>
    </location>
</feature>
<feature type="disulfide bond" evidence="1">
    <location>
        <begin position="23"/>
        <end position="35"/>
    </location>
</feature>
<feature type="non-terminal residue">
    <location>
        <position position="1"/>
    </location>
</feature>
<accession>A9UH01</accession>
<keyword id="KW-0102">Bromination</keyword>
<keyword id="KW-1015">Disulfide bond</keyword>
<keyword id="KW-0379">Hydroxylation</keyword>
<keyword id="KW-0872">Ion channel impairing toxin</keyword>
<keyword id="KW-0528">Neurotoxin</keyword>
<keyword id="KW-0964">Secreted</keyword>
<keyword id="KW-0800">Toxin</keyword>
<sequence>RGVCSTPEGSCVHNGCICQNAPCCHESGCNWANVCPGFLWDKN</sequence>
<dbReference type="EMBL" id="EU284127">
    <property type="protein sequence ID" value="ABX79671.1"/>
    <property type="molecule type" value="mRNA"/>
</dbReference>
<dbReference type="ConoServer" id="2785">
    <property type="toxin name" value="CalTx 12.2.1E"/>
</dbReference>
<dbReference type="GO" id="GO:0005576">
    <property type="term" value="C:extracellular region"/>
    <property type="evidence" value="ECO:0007669"/>
    <property type="project" value="UniProtKB-SubCell"/>
</dbReference>
<dbReference type="GO" id="GO:0099106">
    <property type="term" value="F:ion channel regulator activity"/>
    <property type="evidence" value="ECO:0007669"/>
    <property type="project" value="UniProtKB-KW"/>
</dbReference>
<dbReference type="GO" id="GO:0090729">
    <property type="term" value="F:toxin activity"/>
    <property type="evidence" value="ECO:0007669"/>
    <property type="project" value="UniProtKB-KW"/>
</dbReference>
<organism>
    <name type="scientific">Californiconus californicus</name>
    <name type="common">California cone</name>
    <name type="synonym">Conus californicus</name>
    <dbReference type="NCBI Taxonomy" id="1736779"/>
    <lineage>
        <taxon>Eukaryota</taxon>
        <taxon>Metazoa</taxon>
        <taxon>Spiralia</taxon>
        <taxon>Lophotrochozoa</taxon>
        <taxon>Mollusca</taxon>
        <taxon>Gastropoda</taxon>
        <taxon>Caenogastropoda</taxon>
        <taxon>Neogastropoda</taxon>
        <taxon>Conoidea</taxon>
        <taxon>Conidae</taxon>
        <taxon>Californiconus</taxon>
    </lineage>
</organism>
<name>COCE_CONCL</name>
<proteinExistence type="evidence at transcript level"/>
<evidence type="ECO:0000250" key="1"/>
<evidence type="ECO:0000305" key="2"/>
<reference key="1">
    <citation type="submission" date="2007-05" db="EMBL/GenBank/DDBJ databases">
        <title>Extreme diversity in a novel family of peptide toxins from Conus californicus.</title>
        <authorList>
            <person name="Gilly W.F."/>
            <person name="Richmond T.A."/>
            <person name="Elliger C."/>
            <person name="Lebaric Z."/>
            <person name="Schulz J."/>
            <person name="Bingham J.P."/>
            <person name="Sweedler J.V."/>
        </authorList>
    </citation>
    <scope>NUCLEOTIDE SEQUENCE [MRNA]</scope>
</reference>
<comment type="function">
    <text evidence="1">Mu-conotoxins block voltage-gated sodium channels. This toxin reversibly blocks voltage-gated sodium channel in cephalopods, with no alteration in the voltage dependence of sodium conductance or on the kinetics of inactivation (By similarity).</text>
</comment>
<comment type="subcellular location">
    <subcellularLocation>
        <location evidence="1">Secreted</location>
    </subcellularLocation>
</comment>
<comment type="tissue specificity">
    <text>Expressed by the venom duct.</text>
</comment>
<comment type="domain">
    <text>The cysteine framework is XII (C-C-C-C-CC-C-C).</text>
</comment>